<keyword id="KW-0025">Alternative splicing</keyword>
<keyword id="KW-0333">Golgi apparatus</keyword>
<keyword id="KW-0446">Lipid-binding</keyword>
<keyword id="KW-0472">Membrane</keyword>
<keyword id="KW-0597">Phosphoprotein</keyword>
<keyword id="KW-1185">Reference proteome</keyword>
<sequence length="285" mass="32906">MTTLTHRTRRTEVSKSSEKKIESEEDTNQERSPDNEDPGDSKDIRLTLMEEVLLLGLKDKEGYTSFWNDCISSGLRGGILIELAMRGRIYLEPPTMRKKRLLDRKVLLKSDSPTGDVLLDETLKHIKATEPTETVQTWIELLTGETWNPFKLQYQLRNVRERIAKNLVEKGILTTEKQNFLLFDMTTHPVTNTTEKQRLMKKLQDSVLERWVNDPQRMDRRTLALLVLAHSSDVLENVFSCLTDDKYDVAMNRTKDLVELDPEVEGTKHNATEMIWAVLAAFNKS</sequence>
<accession>Q8R088</accession>
<accession>Q3TIX2</accession>
<accession>Q3TV24</accession>
<organism>
    <name type="scientific">Mus musculus</name>
    <name type="common">Mouse</name>
    <dbReference type="NCBI Taxonomy" id="10090"/>
    <lineage>
        <taxon>Eukaryota</taxon>
        <taxon>Metazoa</taxon>
        <taxon>Chordata</taxon>
        <taxon>Craniata</taxon>
        <taxon>Vertebrata</taxon>
        <taxon>Euteleostomi</taxon>
        <taxon>Mammalia</taxon>
        <taxon>Eutheria</taxon>
        <taxon>Euarchontoglires</taxon>
        <taxon>Glires</taxon>
        <taxon>Rodentia</taxon>
        <taxon>Myomorpha</taxon>
        <taxon>Muroidea</taxon>
        <taxon>Muridae</taxon>
        <taxon>Murinae</taxon>
        <taxon>Mus</taxon>
        <taxon>Mus</taxon>
    </lineage>
</organism>
<reference key="1">
    <citation type="journal article" date="2005" name="Science">
        <title>The transcriptional landscape of the mammalian genome.</title>
        <authorList>
            <person name="Carninci P."/>
            <person name="Kasukawa T."/>
            <person name="Katayama S."/>
            <person name="Gough J."/>
            <person name="Frith M.C."/>
            <person name="Maeda N."/>
            <person name="Oyama R."/>
            <person name="Ravasi T."/>
            <person name="Lenhard B."/>
            <person name="Wells C."/>
            <person name="Kodzius R."/>
            <person name="Shimokawa K."/>
            <person name="Bajic V.B."/>
            <person name="Brenner S.E."/>
            <person name="Batalov S."/>
            <person name="Forrest A.R."/>
            <person name="Zavolan M."/>
            <person name="Davis M.J."/>
            <person name="Wilming L.G."/>
            <person name="Aidinis V."/>
            <person name="Allen J.E."/>
            <person name="Ambesi-Impiombato A."/>
            <person name="Apweiler R."/>
            <person name="Aturaliya R.N."/>
            <person name="Bailey T.L."/>
            <person name="Bansal M."/>
            <person name="Baxter L."/>
            <person name="Beisel K.W."/>
            <person name="Bersano T."/>
            <person name="Bono H."/>
            <person name="Chalk A.M."/>
            <person name="Chiu K.P."/>
            <person name="Choudhary V."/>
            <person name="Christoffels A."/>
            <person name="Clutterbuck D.R."/>
            <person name="Crowe M.L."/>
            <person name="Dalla E."/>
            <person name="Dalrymple B.P."/>
            <person name="de Bono B."/>
            <person name="Della Gatta G."/>
            <person name="di Bernardo D."/>
            <person name="Down T."/>
            <person name="Engstrom P."/>
            <person name="Fagiolini M."/>
            <person name="Faulkner G."/>
            <person name="Fletcher C.F."/>
            <person name="Fukushima T."/>
            <person name="Furuno M."/>
            <person name="Futaki S."/>
            <person name="Gariboldi M."/>
            <person name="Georgii-Hemming P."/>
            <person name="Gingeras T.R."/>
            <person name="Gojobori T."/>
            <person name="Green R.E."/>
            <person name="Gustincich S."/>
            <person name="Harbers M."/>
            <person name="Hayashi Y."/>
            <person name="Hensch T.K."/>
            <person name="Hirokawa N."/>
            <person name="Hill D."/>
            <person name="Huminiecki L."/>
            <person name="Iacono M."/>
            <person name="Ikeo K."/>
            <person name="Iwama A."/>
            <person name="Ishikawa T."/>
            <person name="Jakt M."/>
            <person name="Kanapin A."/>
            <person name="Katoh M."/>
            <person name="Kawasawa Y."/>
            <person name="Kelso J."/>
            <person name="Kitamura H."/>
            <person name="Kitano H."/>
            <person name="Kollias G."/>
            <person name="Krishnan S.P."/>
            <person name="Kruger A."/>
            <person name="Kummerfeld S.K."/>
            <person name="Kurochkin I.V."/>
            <person name="Lareau L.F."/>
            <person name="Lazarevic D."/>
            <person name="Lipovich L."/>
            <person name="Liu J."/>
            <person name="Liuni S."/>
            <person name="McWilliam S."/>
            <person name="Madan Babu M."/>
            <person name="Madera M."/>
            <person name="Marchionni L."/>
            <person name="Matsuda H."/>
            <person name="Matsuzawa S."/>
            <person name="Miki H."/>
            <person name="Mignone F."/>
            <person name="Miyake S."/>
            <person name="Morris K."/>
            <person name="Mottagui-Tabar S."/>
            <person name="Mulder N."/>
            <person name="Nakano N."/>
            <person name="Nakauchi H."/>
            <person name="Ng P."/>
            <person name="Nilsson R."/>
            <person name="Nishiguchi S."/>
            <person name="Nishikawa S."/>
            <person name="Nori F."/>
            <person name="Ohara O."/>
            <person name="Okazaki Y."/>
            <person name="Orlando V."/>
            <person name="Pang K.C."/>
            <person name="Pavan W.J."/>
            <person name="Pavesi G."/>
            <person name="Pesole G."/>
            <person name="Petrovsky N."/>
            <person name="Piazza S."/>
            <person name="Reed J."/>
            <person name="Reid J.F."/>
            <person name="Ring B.Z."/>
            <person name="Ringwald M."/>
            <person name="Rost B."/>
            <person name="Ruan Y."/>
            <person name="Salzberg S.L."/>
            <person name="Sandelin A."/>
            <person name="Schneider C."/>
            <person name="Schoenbach C."/>
            <person name="Sekiguchi K."/>
            <person name="Semple C.A."/>
            <person name="Seno S."/>
            <person name="Sessa L."/>
            <person name="Sheng Y."/>
            <person name="Shibata Y."/>
            <person name="Shimada H."/>
            <person name="Shimada K."/>
            <person name="Silva D."/>
            <person name="Sinclair B."/>
            <person name="Sperling S."/>
            <person name="Stupka E."/>
            <person name="Sugiura K."/>
            <person name="Sultana R."/>
            <person name="Takenaka Y."/>
            <person name="Taki K."/>
            <person name="Tammoja K."/>
            <person name="Tan S.L."/>
            <person name="Tang S."/>
            <person name="Taylor M.S."/>
            <person name="Tegner J."/>
            <person name="Teichmann S.A."/>
            <person name="Ueda H.R."/>
            <person name="van Nimwegen E."/>
            <person name="Verardo R."/>
            <person name="Wei C.L."/>
            <person name="Yagi K."/>
            <person name="Yamanishi H."/>
            <person name="Zabarovsky E."/>
            <person name="Zhu S."/>
            <person name="Zimmer A."/>
            <person name="Hide W."/>
            <person name="Bult C."/>
            <person name="Grimmond S.M."/>
            <person name="Teasdale R.D."/>
            <person name="Liu E.T."/>
            <person name="Brusic V."/>
            <person name="Quackenbush J."/>
            <person name="Wahlestedt C."/>
            <person name="Mattick J.S."/>
            <person name="Hume D.A."/>
            <person name="Kai C."/>
            <person name="Sasaki D."/>
            <person name="Tomaru Y."/>
            <person name="Fukuda S."/>
            <person name="Kanamori-Katayama M."/>
            <person name="Suzuki M."/>
            <person name="Aoki J."/>
            <person name="Arakawa T."/>
            <person name="Iida J."/>
            <person name="Imamura K."/>
            <person name="Itoh M."/>
            <person name="Kato T."/>
            <person name="Kawaji H."/>
            <person name="Kawagashira N."/>
            <person name="Kawashima T."/>
            <person name="Kojima M."/>
            <person name="Kondo S."/>
            <person name="Konno H."/>
            <person name="Nakano K."/>
            <person name="Ninomiya N."/>
            <person name="Nishio T."/>
            <person name="Okada M."/>
            <person name="Plessy C."/>
            <person name="Shibata K."/>
            <person name="Shiraki T."/>
            <person name="Suzuki S."/>
            <person name="Tagami M."/>
            <person name="Waki K."/>
            <person name="Watahiki A."/>
            <person name="Okamura-Oho Y."/>
            <person name="Suzuki H."/>
            <person name="Kawai J."/>
            <person name="Hayashizaki Y."/>
        </authorList>
    </citation>
    <scope>NUCLEOTIDE SEQUENCE [LARGE SCALE MRNA] (ISOFORMS 2 AND 3)</scope>
    <source>
        <strain>C57BL/6J</strain>
        <tissue>Pancreas</tissue>
        <tissue>Placenta</tissue>
    </source>
</reference>
<reference key="2">
    <citation type="journal article" date="2004" name="Genome Res.">
        <title>The status, quality, and expansion of the NIH full-length cDNA project: the Mammalian Gene Collection (MGC).</title>
        <authorList>
            <consortium name="The MGC Project Team"/>
        </authorList>
    </citation>
    <scope>NUCLEOTIDE SEQUENCE [LARGE SCALE MRNA] (ISOFORM 1)</scope>
    <source>
        <strain>FVB/N</strain>
        <tissue>Colon</tissue>
        <tissue>Eye</tissue>
    </source>
</reference>
<reference key="3">
    <citation type="journal article" date="2010" name="Cell">
        <title>A tissue-specific atlas of mouse protein phosphorylation and expression.</title>
        <authorList>
            <person name="Huttlin E.L."/>
            <person name="Jedrychowski M.P."/>
            <person name="Elias J.E."/>
            <person name="Goswami T."/>
            <person name="Rad R."/>
            <person name="Beausoleil S.A."/>
            <person name="Villen J."/>
            <person name="Haas W."/>
            <person name="Sowa M.E."/>
            <person name="Gygi S.P."/>
        </authorList>
    </citation>
    <scope>IDENTIFICATION BY MASS SPECTROMETRY [LARGE SCALE ANALYSIS]</scope>
    <source>
        <tissue>Lung</tissue>
        <tissue>Pancreas</tissue>
        <tissue>Spleen</tissue>
    </source>
</reference>
<reference key="4">
    <citation type="journal article" date="2013" name="Mol. Biol. Cell">
        <title>GOLPH3L antagonizes GOLPH3 to determine Golgi morphology.</title>
        <authorList>
            <person name="Ng M.M."/>
            <person name="Dippold H.C."/>
            <person name="Buschman M.D."/>
            <person name="Noakes C.J."/>
            <person name="Field S.J."/>
        </authorList>
    </citation>
    <scope>TISSUE SPECIFICITY</scope>
</reference>
<feature type="chain" id="PRO_0000324137" description="Golgi phosphoprotein 3-like">
    <location>
        <begin position="1"/>
        <end position="285"/>
    </location>
</feature>
<feature type="region of interest" description="Disordered" evidence="3">
    <location>
        <begin position="1"/>
        <end position="43"/>
    </location>
</feature>
<feature type="region of interest" description="Beta-hairpin required for oligomerization" evidence="1">
    <location>
        <begin position="176"/>
        <end position="187"/>
    </location>
</feature>
<feature type="compositionally biased region" description="Basic and acidic residues" evidence="3">
    <location>
        <begin position="10"/>
        <end position="43"/>
    </location>
</feature>
<feature type="binding site" evidence="1">
    <location>
        <position position="67"/>
    </location>
    <ligand>
        <name>a 1,2-diacyl-sn-glycero-3-phospho-(1D-myo-inositol 4-phosphate)</name>
        <dbReference type="ChEBI" id="CHEBI:58178"/>
    </ligand>
</feature>
<feature type="binding site" evidence="1">
    <location>
        <position position="76"/>
    </location>
    <ligand>
        <name>a 1,2-diacyl-sn-glycero-3-phospho-(1D-myo-inositol 4-phosphate)</name>
        <dbReference type="ChEBI" id="CHEBI:58178"/>
    </ligand>
</feature>
<feature type="binding site" evidence="1">
    <location>
        <position position="157"/>
    </location>
    <ligand>
        <name>a 1,2-diacyl-sn-glycero-3-phospho-(1D-myo-inositol 4-phosphate)</name>
        <dbReference type="ChEBI" id="CHEBI:58178"/>
    </ligand>
</feature>
<feature type="binding site" evidence="1">
    <location>
        <position position="160"/>
    </location>
    <ligand>
        <name>a 1,2-diacyl-sn-glycero-3-phospho-(1D-myo-inositol 4-phosphate)</name>
        <dbReference type="ChEBI" id="CHEBI:58178"/>
    </ligand>
</feature>
<feature type="modified residue" description="Phosphoserine" evidence="2">
    <location>
        <position position="112"/>
    </location>
</feature>
<feature type="splice variant" id="VSP_032151" description="In isoform 2." evidence="5">
    <location>
        <begin position="1"/>
        <end position="84"/>
    </location>
</feature>
<feature type="splice variant" id="VSP_032152" description="In isoform 3." evidence="5">
    <original>WVNDPQRMDRRTLALLVLAHSSDVLENVFSCLTDDKYDVAMNRTKDLVELDPEVEGTKHNATEMIWAVLAAFNKS</original>
    <variation>LCFSALLSSDTS</variation>
    <location>
        <begin position="211"/>
        <end position="285"/>
    </location>
</feature>
<protein>
    <recommendedName>
        <fullName>Golgi phosphoprotein 3-like</fullName>
    </recommendedName>
</protein>
<comment type="function">
    <text evidence="1">Phosphatidylinositol-4-phosphate-binding protein that may antagonize the action of GOLPH3 which is required for the process of vesicle budding at the Golgi and anterograde transport to the plasma membrane.</text>
</comment>
<comment type="subunit">
    <text evidence="1">Homooligomer. Does not interact MYO18; differs from GOLPH3 by its inability to interact with MYO18. May interact with ARF1 (By similarity).</text>
</comment>
<comment type="subcellular location">
    <subcellularLocation>
        <location evidence="1">Golgi apparatus</location>
        <location evidence="1">Golgi stack membrane</location>
        <topology evidence="1">Peripheral membrane protein</topology>
        <orientation evidence="1">Cytoplasmic side</orientation>
    </subcellularLocation>
    <subcellularLocation>
        <location evidence="1">Golgi apparatus</location>
        <location evidence="1">trans-Golgi network membrane</location>
        <topology evidence="1">Peripheral membrane protein</topology>
        <orientation evidence="1">Cytoplasmic side</orientation>
    </subcellularLocation>
    <text evidence="1">Phosphatidylinositol 4-phosphate (PtdIns4P)-binding mediates recruitment to Golgi membranes.</text>
</comment>
<comment type="alternative products">
    <event type="alternative splicing"/>
    <isoform>
        <id>Q8R088-1</id>
        <name>1</name>
        <sequence type="displayed"/>
    </isoform>
    <isoform>
        <id>Q8R088-2</id>
        <name>2</name>
        <sequence type="described" ref="VSP_032151"/>
    </isoform>
    <isoform>
        <id>Q8R088-3</id>
        <name>3</name>
        <sequence type="described" ref="VSP_032152"/>
    </isoform>
</comment>
<comment type="tissue specificity">
    <text evidence="4">Expressed in a subset of tissues tested with higher expression in salivary gland, small intestine and skin (at protein level).</text>
</comment>
<comment type="similarity">
    <text evidence="6">Belongs to the GOLPH3/VPS74 family.</text>
</comment>
<dbReference type="EMBL" id="AK160454">
    <property type="protein sequence ID" value="BAE35796.1"/>
    <property type="molecule type" value="mRNA"/>
</dbReference>
<dbReference type="EMBL" id="AK167675">
    <property type="protein sequence ID" value="BAE39724.1"/>
    <property type="molecule type" value="mRNA"/>
</dbReference>
<dbReference type="EMBL" id="BC027194">
    <property type="protein sequence ID" value="AAH27194.1"/>
    <property type="molecule type" value="mRNA"/>
</dbReference>
<dbReference type="EMBL" id="BC047147">
    <property type="protein sequence ID" value="AAH47147.1"/>
    <property type="molecule type" value="mRNA"/>
</dbReference>
<dbReference type="CCDS" id="CCDS17616.2">
    <molecule id="Q8R088-1"/>
</dbReference>
<dbReference type="CCDS" id="CCDS57234.1">
    <molecule id="Q8R088-3"/>
</dbReference>
<dbReference type="CCDS" id="CCDS57235.1">
    <molecule id="Q8R088-2"/>
</dbReference>
<dbReference type="RefSeq" id="NP_001171140.2">
    <molecule id="Q8R088-2"/>
    <property type="nucleotide sequence ID" value="NM_001177669.2"/>
</dbReference>
<dbReference type="RefSeq" id="NP_001171141.2">
    <molecule id="Q8R088-3"/>
    <property type="nucleotide sequence ID" value="NM_001177670.2"/>
</dbReference>
<dbReference type="RefSeq" id="NP_001391048.1">
    <molecule id="Q8R088-1"/>
    <property type="nucleotide sequence ID" value="NM_001404119.1"/>
</dbReference>
<dbReference type="RefSeq" id="NP_001391049.1">
    <molecule id="Q8R088-1"/>
    <property type="nucleotide sequence ID" value="NM_001404120.1"/>
</dbReference>
<dbReference type="RefSeq" id="NP_666245.3">
    <molecule id="Q8R088-1"/>
    <property type="nucleotide sequence ID" value="NM_146133.4"/>
</dbReference>
<dbReference type="SMR" id="Q8R088"/>
<dbReference type="BioGRID" id="230867">
    <property type="interactions" value="1"/>
</dbReference>
<dbReference type="FunCoup" id="Q8R088">
    <property type="interactions" value="807"/>
</dbReference>
<dbReference type="STRING" id="10090.ENSMUSP00000134799"/>
<dbReference type="iPTMnet" id="Q8R088"/>
<dbReference type="PhosphoSitePlus" id="Q8R088"/>
<dbReference type="PaxDb" id="10090-ENSMUSP00000134799"/>
<dbReference type="ProteomicsDB" id="263369">
    <molecule id="Q8R088-1"/>
</dbReference>
<dbReference type="ProteomicsDB" id="263370">
    <molecule id="Q8R088-2"/>
</dbReference>
<dbReference type="ProteomicsDB" id="263371">
    <molecule id="Q8R088-3"/>
</dbReference>
<dbReference type="Pumba" id="Q8R088"/>
<dbReference type="DNASU" id="229593"/>
<dbReference type="Ensembl" id="ENSMUST00000176755.8">
    <molecule id="Q8R088-3"/>
    <property type="protein sequence ID" value="ENSMUSP00000134804.3"/>
    <property type="gene ID" value="ENSMUSG00000046519.17"/>
</dbReference>
<dbReference type="Ensembl" id="ENSMUST00000177389.8">
    <molecule id="Q8R088-2"/>
    <property type="protein sequence ID" value="ENSMUSP00000135406.3"/>
    <property type="gene ID" value="ENSMUSG00000046519.17"/>
</dbReference>
<dbReference type="Ensembl" id="ENSMUST00000177390.8">
    <molecule id="Q8R088-1"/>
    <property type="protein sequence ID" value="ENSMUSP00000134799.3"/>
    <property type="gene ID" value="ENSMUSG00000046519.17"/>
</dbReference>
<dbReference type="GeneID" id="229593"/>
<dbReference type="KEGG" id="mmu:229593"/>
<dbReference type="AGR" id="MGI:1917129"/>
<dbReference type="CTD" id="55204"/>
<dbReference type="MGI" id="MGI:1917129">
    <property type="gene designation" value="Golph3l"/>
</dbReference>
<dbReference type="eggNOG" id="KOG3983">
    <property type="taxonomic scope" value="Eukaryota"/>
</dbReference>
<dbReference type="GeneTree" id="ENSGT00390000007153"/>
<dbReference type="InParanoid" id="Q8R088"/>
<dbReference type="OrthoDB" id="2189106at2759"/>
<dbReference type="PhylomeDB" id="Q8R088"/>
<dbReference type="BioGRID-ORCS" id="229593">
    <property type="hits" value="3 hits in 78 CRISPR screens"/>
</dbReference>
<dbReference type="ChiTaRS" id="Golph3l">
    <property type="organism name" value="mouse"/>
</dbReference>
<dbReference type="PRO" id="PR:Q8R088"/>
<dbReference type="Proteomes" id="UP000000589">
    <property type="component" value="Chromosome 3"/>
</dbReference>
<dbReference type="RNAct" id="Q8R088">
    <property type="molecule type" value="protein"/>
</dbReference>
<dbReference type="GO" id="GO:0005829">
    <property type="term" value="C:cytosol"/>
    <property type="evidence" value="ECO:0007669"/>
    <property type="project" value="Ensembl"/>
</dbReference>
<dbReference type="GO" id="GO:0005794">
    <property type="term" value="C:Golgi apparatus"/>
    <property type="evidence" value="ECO:0000266"/>
    <property type="project" value="MGI"/>
</dbReference>
<dbReference type="GO" id="GO:0031985">
    <property type="term" value="C:Golgi cisterna"/>
    <property type="evidence" value="ECO:0000250"/>
    <property type="project" value="UniProtKB"/>
</dbReference>
<dbReference type="GO" id="GO:0032580">
    <property type="term" value="C:Golgi cisterna membrane"/>
    <property type="evidence" value="ECO:0007669"/>
    <property type="project" value="UniProtKB-SubCell"/>
</dbReference>
<dbReference type="GO" id="GO:0005802">
    <property type="term" value="C:trans-Golgi network"/>
    <property type="evidence" value="ECO:0000250"/>
    <property type="project" value="UniProtKB"/>
</dbReference>
<dbReference type="GO" id="GO:0140312">
    <property type="term" value="F:cargo adaptor activity"/>
    <property type="evidence" value="ECO:0007669"/>
    <property type="project" value="Ensembl"/>
</dbReference>
<dbReference type="GO" id="GO:0070273">
    <property type="term" value="F:phosphatidylinositol-4-phosphate binding"/>
    <property type="evidence" value="ECO:0000250"/>
    <property type="project" value="UniProtKB"/>
</dbReference>
<dbReference type="GO" id="GO:0007030">
    <property type="term" value="P:Golgi organization"/>
    <property type="evidence" value="ECO:0000250"/>
    <property type="project" value="UniProtKB"/>
</dbReference>
<dbReference type="GO" id="GO:0050714">
    <property type="term" value="P:positive regulation of protein secretion"/>
    <property type="evidence" value="ECO:0000250"/>
    <property type="project" value="UniProtKB"/>
</dbReference>
<dbReference type="GO" id="GO:0140450">
    <property type="term" value="P:protein targeting to Golgi apparatus"/>
    <property type="evidence" value="ECO:0007669"/>
    <property type="project" value="Ensembl"/>
</dbReference>
<dbReference type="FunFam" id="1.10.3630.10:FF:000001">
    <property type="entry name" value="Golgi phosphoprotein 3"/>
    <property type="match status" value="1"/>
</dbReference>
<dbReference type="Gene3D" id="1.10.3630.10">
    <property type="entry name" value="yeast vps74-n-term truncation variant domain like"/>
    <property type="match status" value="1"/>
</dbReference>
<dbReference type="InterPro" id="IPR008628">
    <property type="entry name" value="GPP34-like"/>
</dbReference>
<dbReference type="InterPro" id="IPR038261">
    <property type="entry name" value="GPP34-like_sf"/>
</dbReference>
<dbReference type="PANTHER" id="PTHR12704:SF4">
    <property type="entry name" value="GOLGI PHOSPHOPROTEIN 3-LIKE"/>
    <property type="match status" value="1"/>
</dbReference>
<dbReference type="PANTHER" id="PTHR12704">
    <property type="entry name" value="TRANS-GOLGI PROTEIN GMX33"/>
    <property type="match status" value="1"/>
</dbReference>
<dbReference type="Pfam" id="PF05719">
    <property type="entry name" value="GPP34"/>
    <property type="match status" value="1"/>
</dbReference>
<gene>
    <name type="primary">Golph3l</name>
</gene>
<evidence type="ECO:0000250" key="1"/>
<evidence type="ECO:0000250" key="2">
    <source>
        <dbReference type="UniProtKB" id="Q9H4A5"/>
    </source>
</evidence>
<evidence type="ECO:0000256" key="3">
    <source>
        <dbReference type="SAM" id="MobiDB-lite"/>
    </source>
</evidence>
<evidence type="ECO:0000269" key="4">
    <source>
    </source>
</evidence>
<evidence type="ECO:0000303" key="5">
    <source>
    </source>
</evidence>
<evidence type="ECO:0000305" key="6"/>
<name>GLP3L_MOUSE</name>
<proteinExistence type="evidence at protein level"/>